<protein>
    <recommendedName>
        <fullName>WD-40 repeat-containing protein MSI2</fullName>
    </recommendedName>
</protein>
<proteinExistence type="evidence at transcript level"/>
<name>MSI2_ARATH</name>
<reference key="1">
    <citation type="journal article" date="1997" name="Plant Cell">
        <title>A conserved family of WD-40 proteins binds to the retinoblastoma protein in both plants and animals.</title>
        <authorList>
            <person name="Ach R.A."/>
            <person name="Taranto P."/>
            <person name="Gruissem W."/>
        </authorList>
    </citation>
    <scope>NUCLEOTIDE SEQUENCE [MRNA]</scope>
</reference>
<reference key="2">
    <citation type="journal article" date="1999" name="Nature">
        <title>Sequence and analysis of chromosome 2 of the plant Arabidopsis thaliana.</title>
        <authorList>
            <person name="Lin X."/>
            <person name="Kaul S."/>
            <person name="Rounsley S.D."/>
            <person name="Shea T.P."/>
            <person name="Benito M.-I."/>
            <person name="Town C.D."/>
            <person name="Fujii C.Y."/>
            <person name="Mason T.M."/>
            <person name="Bowman C.L."/>
            <person name="Barnstead M.E."/>
            <person name="Feldblyum T.V."/>
            <person name="Buell C.R."/>
            <person name="Ketchum K.A."/>
            <person name="Lee J.J."/>
            <person name="Ronning C.M."/>
            <person name="Koo H.L."/>
            <person name="Moffat K.S."/>
            <person name="Cronin L.A."/>
            <person name="Shen M."/>
            <person name="Pai G."/>
            <person name="Van Aken S."/>
            <person name="Umayam L."/>
            <person name="Tallon L.J."/>
            <person name="Gill J.E."/>
            <person name="Adams M.D."/>
            <person name="Carrera A.J."/>
            <person name="Creasy T.H."/>
            <person name="Goodman H.M."/>
            <person name="Somerville C.R."/>
            <person name="Copenhaver G.P."/>
            <person name="Preuss D."/>
            <person name="Nierman W.C."/>
            <person name="White O."/>
            <person name="Eisen J.A."/>
            <person name="Salzberg S.L."/>
            <person name="Fraser C.M."/>
            <person name="Venter J.C."/>
        </authorList>
    </citation>
    <scope>NUCLEOTIDE SEQUENCE [LARGE SCALE GENOMIC DNA]</scope>
    <source>
        <strain>cv. Columbia</strain>
    </source>
</reference>
<reference key="3">
    <citation type="journal article" date="2017" name="Plant J.">
        <title>Araport11: a complete reannotation of the Arabidopsis thaliana reference genome.</title>
        <authorList>
            <person name="Cheng C.Y."/>
            <person name="Krishnakumar V."/>
            <person name="Chan A.P."/>
            <person name="Thibaud-Nissen F."/>
            <person name="Schobel S."/>
            <person name="Town C.D."/>
        </authorList>
    </citation>
    <scope>GENOME REANNOTATION</scope>
    <source>
        <strain>cv. Columbia</strain>
    </source>
</reference>
<reference key="4">
    <citation type="journal article" date="2003" name="Science">
        <title>Empirical analysis of transcriptional activity in the Arabidopsis genome.</title>
        <authorList>
            <person name="Yamada K."/>
            <person name="Lim J."/>
            <person name="Dale J.M."/>
            <person name="Chen H."/>
            <person name="Shinn P."/>
            <person name="Palm C.J."/>
            <person name="Southwick A.M."/>
            <person name="Wu H.C."/>
            <person name="Kim C.J."/>
            <person name="Nguyen M."/>
            <person name="Pham P.K."/>
            <person name="Cheuk R.F."/>
            <person name="Karlin-Newmann G."/>
            <person name="Liu S.X."/>
            <person name="Lam B."/>
            <person name="Sakano H."/>
            <person name="Wu T."/>
            <person name="Yu G."/>
            <person name="Miranda M."/>
            <person name="Quach H.L."/>
            <person name="Tripp M."/>
            <person name="Chang C.H."/>
            <person name="Lee J.M."/>
            <person name="Toriumi M.J."/>
            <person name="Chan M.M."/>
            <person name="Tang C.C."/>
            <person name="Onodera C.S."/>
            <person name="Deng J.M."/>
            <person name="Akiyama K."/>
            <person name="Ansari Y."/>
            <person name="Arakawa T."/>
            <person name="Banh J."/>
            <person name="Banno F."/>
            <person name="Bowser L."/>
            <person name="Brooks S.Y."/>
            <person name="Carninci P."/>
            <person name="Chao Q."/>
            <person name="Choy N."/>
            <person name="Enju A."/>
            <person name="Goldsmith A.D."/>
            <person name="Gurjal M."/>
            <person name="Hansen N.F."/>
            <person name="Hayashizaki Y."/>
            <person name="Johnson-Hopson C."/>
            <person name="Hsuan V.W."/>
            <person name="Iida K."/>
            <person name="Karnes M."/>
            <person name="Khan S."/>
            <person name="Koesema E."/>
            <person name="Ishida J."/>
            <person name="Jiang P.X."/>
            <person name="Jones T."/>
            <person name="Kawai J."/>
            <person name="Kamiya A."/>
            <person name="Meyers C."/>
            <person name="Nakajima M."/>
            <person name="Narusaka M."/>
            <person name="Seki M."/>
            <person name="Sakurai T."/>
            <person name="Satou M."/>
            <person name="Tamse R."/>
            <person name="Vaysberg M."/>
            <person name="Wallender E.K."/>
            <person name="Wong C."/>
            <person name="Yamamura Y."/>
            <person name="Yuan S."/>
            <person name="Shinozaki K."/>
            <person name="Davis R.W."/>
            <person name="Theologis A."/>
            <person name="Ecker J.R."/>
        </authorList>
    </citation>
    <scope>NUCLEOTIDE SEQUENCE [LARGE SCALE MRNA]</scope>
    <source>
        <strain>cv. Columbia</strain>
    </source>
</reference>
<reference key="5">
    <citation type="journal article" date="2008" name="Plant Cell">
        <title>Characterization of Arabidopsis and rice DWD proteins and their roles as substrate receptors for CUL4-RING E3 ubiquitin ligases.</title>
        <authorList>
            <person name="Lee J.H."/>
            <person name="Terzaghi W."/>
            <person name="Gusmaroli G."/>
            <person name="Charron J.B."/>
            <person name="Yoon H.J."/>
            <person name="Chen H."/>
            <person name="He Y.J."/>
            <person name="Xiong Y."/>
            <person name="Deng X.W."/>
        </authorList>
    </citation>
    <scope>DWD MOTIF</scope>
</reference>
<feature type="chain" id="PRO_0000051081" description="WD-40 repeat-containing protein MSI2">
    <location>
        <begin position="1"/>
        <end position="415"/>
    </location>
</feature>
<feature type="repeat" description="WD 1">
    <location>
        <begin position="166"/>
        <end position="206"/>
    </location>
</feature>
<feature type="repeat" description="WD 2">
    <location>
        <begin position="215"/>
        <end position="255"/>
    </location>
</feature>
<feature type="repeat" description="WD 3">
    <location>
        <begin position="258"/>
        <end position="298"/>
    </location>
</feature>
<feature type="repeat" description="WD 4">
    <location>
        <begin position="302"/>
        <end position="342"/>
    </location>
</feature>
<feature type="repeat" description="WD 5">
    <location>
        <begin position="361"/>
        <end position="401"/>
    </location>
</feature>
<feature type="short sequence motif" description="DWD box">
    <location>
        <begin position="232"/>
        <end position="248"/>
    </location>
</feature>
<keyword id="KW-0156">Chromatin regulator</keyword>
<keyword id="KW-0539">Nucleus</keyword>
<keyword id="KW-1185">Reference proteome</keyword>
<keyword id="KW-0677">Repeat</keyword>
<keyword id="KW-0678">Repressor</keyword>
<keyword id="KW-0804">Transcription</keyword>
<keyword id="KW-0805">Transcription regulation</keyword>
<keyword id="KW-0853">WD repeat</keyword>
<evidence type="ECO:0000250" key="1"/>
<evidence type="ECO:0000305" key="2"/>
<accession>O22468</accession>
<sequence>MADEGKEETGMGQVEEDFSVWKKNTPFLYDLLISHPLEWPSLTVHWVPSTPNPYVADSYFGVHKLILGTHTSGSAQDFLMVADVVTPTPNAEPGIGGANQDPFIPKVEIRQRIRVDGEVNRARCMPQKPTLVGAKTSGCEVFLFDYAKHAAKSQTSECDPDLRLVGHDKEGYGLSWSPFKEGYLLSGSQDQKICLWDVSATPQDKVLNAMFVYEGHESAIADVSWHMKNENLFGSAGEDGRLVIWDTRTNQMQHQVKVHEREVNYLSFNPFNEWVLATASSDSTVALFDLRKLNAPLHVMSSHEGEVFQVEWDPNHETVLASSGEDRRLMVWDLNRVGEEQLEIELDAEDGPPELLFSHGGHKAKISDFAWNKNEPWVIASVAEDNSLQVWQMAESIYRDEEDAEDIKEDITQQS</sequence>
<gene>
    <name type="primary">MSI2</name>
    <name type="ordered locus">At2g16780</name>
    <name type="ORF">T24I21.19</name>
</gene>
<dbReference type="EMBL" id="AF016847">
    <property type="protein sequence ID" value="AAB70243.1"/>
    <property type="molecule type" value="mRNA"/>
</dbReference>
<dbReference type="EMBL" id="AC005825">
    <property type="protein sequence ID" value="AAD24611.1"/>
    <property type="molecule type" value="Genomic_DNA"/>
</dbReference>
<dbReference type="EMBL" id="CP002685">
    <property type="protein sequence ID" value="AEC06537.1"/>
    <property type="molecule type" value="Genomic_DNA"/>
</dbReference>
<dbReference type="EMBL" id="AY056814">
    <property type="protein sequence ID" value="AAL10505.1"/>
    <property type="molecule type" value="mRNA"/>
</dbReference>
<dbReference type="PIR" id="B84544">
    <property type="entry name" value="B84544"/>
</dbReference>
<dbReference type="RefSeq" id="NP_179269.1">
    <property type="nucleotide sequence ID" value="NM_127230.4"/>
</dbReference>
<dbReference type="SMR" id="O22468"/>
<dbReference type="FunCoup" id="O22468">
    <property type="interactions" value="838"/>
</dbReference>
<dbReference type="STRING" id="3702.O22468"/>
<dbReference type="PaxDb" id="3702-AT2G16780.1"/>
<dbReference type="ProteomicsDB" id="250783"/>
<dbReference type="EnsemblPlants" id="AT2G16780.1">
    <property type="protein sequence ID" value="AT2G16780.1"/>
    <property type="gene ID" value="AT2G16780"/>
</dbReference>
<dbReference type="GeneID" id="816179"/>
<dbReference type="Gramene" id="AT2G16780.1">
    <property type="protein sequence ID" value="AT2G16780.1"/>
    <property type="gene ID" value="AT2G16780"/>
</dbReference>
<dbReference type="KEGG" id="ath:AT2G16780"/>
<dbReference type="Araport" id="AT2G16780"/>
<dbReference type="TAIR" id="AT2G16780">
    <property type="gene designation" value="MSI2"/>
</dbReference>
<dbReference type="eggNOG" id="KOG0264">
    <property type="taxonomic scope" value="Eukaryota"/>
</dbReference>
<dbReference type="HOGENOM" id="CLU_020445_3_1_1"/>
<dbReference type="InParanoid" id="O22468"/>
<dbReference type="OMA" id="HVFDSHE"/>
<dbReference type="PhylomeDB" id="O22468"/>
<dbReference type="CD-CODE" id="4299E36E">
    <property type="entry name" value="Nucleolus"/>
</dbReference>
<dbReference type="PRO" id="PR:O22468"/>
<dbReference type="Proteomes" id="UP000006548">
    <property type="component" value="Chromosome 2"/>
</dbReference>
<dbReference type="ExpressionAtlas" id="O22468">
    <property type="expression patterns" value="baseline and differential"/>
</dbReference>
<dbReference type="GO" id="GO:0080008">
    <property type="term" value="C:Cul4-RING E3 ubiquitin ligase complex"/>
    <property type="evidence" value="ECO:0000250"/>
    <property type="project" value="TAIR"/>
</dbReference>
<dbReference type="GO" id="GO:0005634">
    <property type="term" value="C:nucleus"/>
    <property type="evidence" value="ECO:0007669"/>
    <property type="project" value="UniProtKB-SubCell"/>
</dbReference>
<dbReference type="GO" id="GO:0006325">
    <property type="term" value="P:chromatin organization"/>
    <property type="evidence" value="ECO:0007669"/>
    <property type="project" value="UniProtKB-KW"/>
</dbReference>
<dbReference type="FunFam" id="2.130.10.10:FF:000512">
    <property type="entry name" value="WD-40 repeat-containing protein MSI1"/>
    <property type="match status" value="1"/>
</dbReference>
<dbReference type="Gene3D" id="2.130.10.10">
    <property type="entry name" value="YVTN repeat-like/Quinoprotein amine dehydrogenase"/>
    <property type="match status" value="1"/>
</dbReference>
<dbReference type="InterPro" id="IPR020472">
    <property type="entry name" value="G-protein_beta_WD-40_rep"/>
</dbReference>
<dbReference type="InterPro" id="IPR022052">
    <property type="entry name" value="Histone-bd_RBBP4-like_N"/>
</dbReference>
<dbReference type="InterPro" id="IPR015943">
    <property type="entry name" value="WD40/YVTN_repeat-like_dom_sf"/>
</dbReference>
<dbReference type="InterPro" id="IPR019775">
    <property type="entry name" value="WD40_repeat_CS"/>
</dbReference>
<dbReference type="InterPro" id="IPR036322">
    <property type="entry name" value="WD40_repeat_dom_sf"/>
</dbReference>
<dbReference type="InterPro" id="IPR001680">
    <property type="entry name" value="WD40_rpt"/>
</dbReference>
<dbReference type="InterPro" id="IPR050459">
    <property type="entry name" value="WD_repeat_RBAP46/RBAP48/MSI1"/>
</dbReference>
<dbReference type="PANTHER" id="PTHR22850">
    <property type="entry name" value="WD40 REPEAT FAMILY"/>
    <property type="match status" value="1"/>
</dbReference>
<dbReference type="Pfam" id="PF12265">
    <property type="entry name" value="CAF1C_H4-bd"/>
    <property type="match status" value="1"/>
</dbReference>
<dbReference type="Pfam" id="PF00400">
    <property type="entry name" value="WD40"/>
    <property type="match status" value="5"/>
</dbReference>
<dbReference type="PRINTS" id="PR00320">
    <property type="entry name" value="GPROTEINBRPT"/>
</dbReference>
<dbReference type="SMART" id="SM00320">
    <property type="entry name" value="WD40"/>
    <property type="match status" value="5"/>
</dbReference>
<dbReference type="SUPFAM" id="SSF50978">
    <property type="entry name" value="WD40 repeat-like"/>
    <property type="match status" value="1"/>
</dbReference>
<dbReference type="PROSITE" id="PS00678">
    <property type="entry name" value="WD_REPEATS_1"/>
    <property type="match status" value="2"/>
</dbReference>
<dbReference type="PROSITE" id="PS50082">
    <property type="entry name" value="WD_REPEATS_2"/>
    <property type="match status" value="5"/>
</dbReference>
<dbReference type="PROSITE" id="PS50294">
    <property type="entry name" value="WD_REPEATS_REGION"/>
    <property type="match status" value="1"/>
</dbReference>
<organism>
    <name type="scientific">Arabidopsis thaliana</name>
    <name type="common">Mouse-ear cress</name>
    <dbReference type="NCBI Taxonomy" id="3702"/>
    <lineage>
        <taxon>Eukaryota</taxon>
        <taxon>Viridiplantae</taxon>
        <taxon>Streptophyta</taxon>
        <taxon>Embryophyta</taxon>
        <taxon>Tracheophyta</taxon>
        <taxon>Spermatophyta</taxon>
        <taxon>Magnoliopsida</taxon>
        <taxon>eudicotyledons</taxon>
        <taxon>Gunneridae</taxon>
        <taxon>Pentapetalae</taxon>
        <taxon>rosids</taxon>
        <taxon>malvids</taxon>
        <taxon>Brassicales</taxon>
        <taxon>Brassicaceae</taxon>
        <taxon>Camelineae</taxon>
        <taxon>Arabidopsis</taxon>
    </lineage>
</organism>
<comment type="function">
    <text evidence="1">Core histone-binding subunit that may target chromatin assembly factors, chromatin remodeling factors and histone deacetylases to their histone substrates in a manner that is regulated by nucleosomal DNA.</text>
</comment>
<comment type="subcellular location">
    <subcellularLocation>
        <location evidence="1">Nucleus</location>
    </subcellularLocation>
</comment>
<comment type="domain">
    <text evidence="1">The DWD box is required for interaction with DDB1A.</text>
</comment>
<comment type="similarity">
    <text evidence="2">Belongs to the WD repeat RBAP46/RBAP48/MSI1 family.</text>
</comment>